<organism>
    <name type="scientific">Salmonella paratyphi A (strain ATCC 9150 / SARB42)</name>
    <dbReference type="NCBI Taxonomy" id="295319"/>
    <lineage>
        <taxon>Bacteria</taxon>
        <taxon>Pseudomonadati</taxon>
        <taxon>Pseudomonadota</taxon>
        <taxon>Gammaproteobacteria</taxon>
        <taxon>Enterobacterales</taxon>
        <taxon>Enterobacteriaceae</taxon>
        <taxon>Salmonella</taxon>
    </lineage>
</organism>
<protein>
    <recommendedName>
        <fullName evidence="1">Ascorbate-specific PTS system EIIC component</fullName>
    </recommendedName>
    <alternativeName>
        <fullName evidence="1">Ascorbate-specific permease IIC component UlaA</fullName>
    </alternativeName>
</protein>
<reference key="1">
    <citation type="journal article" date="2004" name="Nat. Genet.">
        <title>Comparison of genome degradation in Paratyphi A and Typhi, human-restricted serovars of Salmonella enterica that cause typhoid.</title>
        <authorList>
            <person name="McClelland M."/>
            <person name="Sanderson K.E."/>
            <person name="Clifton S.W."/>
            <person name="Latreille P."/>
            <person name="Porwollik S."/>
            <person name="Sabo A."/>
            <person name="Meyer R."/>
            <person name="Bieri T."/>
            <person name="Ozersky P."/>
            <person name="McLellan M."/>
            <person name="Harkins C.R."/>
            <person name="Wang C."/>
            <person name="Nguyen C."/>
            <person name="Berghoff A."/>
            <person name="Elliott G."/>
            <person name="Kohlberg S."/>
            <person name="Strong C."/>
            <person name="Du F."/>
            <person name="Carter J."/>
            <person name="Kremizki C."/>
            <person name="Layman D."/>
            <person name="Leonard S."/>
            <person name="Sun H."/>
            <person name="Fulton L."/>
            <person name="Nash W."/>
            <person name="Miner T."/>
            <person name="Minx P."/>
            <person name="Delehaunty K."/>
            <person name="Fronick C."/>
            <person name="Magrini V."/>
            <person name="Nhan M."/>
            <person name="Warren W."/>
            <person name="Florea L."/>
            <person name="Spieth J."/>
            <person name="Wilson R.K."/>
        </authorList>
    </citation>
    <scope>NUCLEOTIDE SEQUENCE [LARGE SCALE GENOMIC DNA]</scope>
    <source>
        <strain>ATCC 9150 / SARB42</strain>
    </source>
</reference>
<dbReference type="EMBL" id="CP000026">
    <property type="protein sequence ID" value="AAV79937.1"/>
    <property type="status" value="ALT_INIT"/>
    <property type="molecule type" value="Genomic_DNA"/>
</dbReference>
<dbReference type="SMR" id="Q5PJ48"/>
<dbReference type="KEGG" id="spt:SPA4200"/>
<dbReference type="HOGENOM" id="CLU_031784_1_0_6"/>
<dbReference type="Proteomes" id="UP000008185">
    <property type="component" value="Chromosome"/>
</dbReference>
<dbReference type="GO" id="GO:0005886">
    <property type="term" value="C:plasma membrane"/>
    <property type="evidence" value="ECO:0007669"/>
    <property type="project" value="UniProtKB-SubCell"/>
</dbReference>
<dbReference type="GO" id="GO:0009401">
    <property type="term" value="P:phosphoenolpyruvate-dependent sugar phosphotransferase system"/>
    <property type="evidence" value="ECO:0007669"/>
    <property type="project" value="UniProtKB-KW"/>
</dbReference>
<dbReference type="InterPro" id="IPR051562">
    <property type="entry name" value="Ascorbate-PTS_EIIC"/>
</dbReference>
<dbReference type="InterPro" id="IPR004703">
    <property type="entry name" value="PTS_sugar-sp_permease"/>
</dbReference>
<dbReference type="NCBIfam" id="NF006919">
    <property type="entry name" value="PRK09410.1-1"/>
    <property type="match status" value="1"/>
</dbReference>
<dbReference type="PANTHER" id="PTHR33843">
    <property type="entry name" value="ASCORBATE-SPECIFIC PTS SYSTEM EIIC COMPONENT"/>
    <property type="match status" value="1"/>
</dbReference>
<dbReference type="PANTHER" id="PTHR33843:SF4">
    <property type="entry name" value="ASCORBATE-SPECIFIC PTS SYSTEM EIIC COMPONENT"/>
    <property type="match status" value="1"/>
</dbReference>
<dbReference type="Pfam" id="PF03611">
    <property type="entry name" value="EIIC-GAT"/>
    <property type="match status" value="1"/>
</dbReference>
<feature type="chain" id="PRO_0000230658" description="Ascorbate-specific PTS system EIIC component">
    <location>
        <begin position="1"/>
        <end position="465"/>
    </location>
</feature>
<feature type="transmembrane region" description="Helical" evidence="1">
    <location>
        <begin position="14"/>
        <end position="34"/>
    </location>
</feature>
<feature type="transmembrane region" description="Helical" evidence="1">
    <location>
        <begin position="38"/>
        <end position="58"/>
    </location>
</feature>
<feature type="transmembrane region" description="Helical" evidence="1">
    <location>
        <begin position="101"/>
        <end position="121"/>
    </location>
</feature>
<feature type="transmembrane region" description="Helical" evidence="1">
    <location>
        <begin position="141"/>
        <end position="161"/>
    </location>
</feature>
<feature type="transmembrane region" description="Helical" evidence="1">
    <location>
        <begin position="233"/>
        <end position="253"/>
    </location>
</feature>
<feature type="transmembrane region" description="Helical" evidence="1">
    <location>
        <begin position="263"/>
        <end position="283"/>
    </location>
</feature>
<feature type="transmembrane region" description="Helical" evidence="1">
    <location>
        <begin position="316"/>
        <end position="336"/>
    </location>
</feature>
<feature type="transmembrane region" description="Helical" evidence="1">
    <location>
        <begin position="338"/>
        <end position="358"/>
    </location>
</feature>
<feature type="transmembrane region" description="Helical" evidence="1">
    <location>
        <begin position="379"/>
        <end position="399"/>
    </location>
</feature>
<feature type="transmembrane region" description="Helical" evidence="1">
    <location>
        <begin position="427"/>
        <end position="447"/>
    </location>
</feature>
<feature type="binding site" evidence="1">
    <location>
        <begin position="86"/>
        <end position="87"/>
    </location>
    <ligand>
        <name>L-ascorbate</name>
        <dbReference type="ChEBI" id="CHEBI:38290"/>
    </ligand>
</feature>
<feature type="binding site" evidence="1">
    <location>
        <begin position="135"/>
        <end position="139"/>
    </location>
    <ligand>
        <name>L-ascorbate</name>
        <dbReference type="ChEBI" id="CHEBI:38290"/>
    </ligand>
</feature>
<feature type="binding site" evidence="1">
    <location>
        <begin position="194"/>
        <end position="195"/>
    </location>
    <ligand>
        <name>L-ascorbate</name>
        <dbReference type="ChEBI" id="CHEBI:38290"/>
    </ligand>
</feature>
<feature type="binding site" evidence="1">
    <location>
        <position position="314"/>
    </location>
    <ligand>
        <name>L-ascorbate</name>
        <dbReference type="ChEBI" id="CHEBI:38290"/>
    </ligand>
</feature>
<gene>
    <name type="primary">ulaA</name>
    <name type="ordered locus">SPA4200</name>
</gene>
<evidence type="ECO:0000250" key="1">
    <source>
        <dbReference type="UniProtKB" id="P39301"/>
    </source>
</evidence>
<evidence type="ECO:0000305" key="2"/>
<keyword id="KW-0997">Cell inner membrane</keyword>
<keyword id="KW-1003">Cell membrane</keyword>
<keyword id="KW-0472">Membrane</keyword>
<keyword id="KW-0598">Phosphotransferase system</keyword>
<keyword id="KW-0762">Sugar transport</keyword>
<keyword id="KW-0812">Transmembrane</keyword>
<keyword id="KW-1133">Transmembrane helix</keyword>
<keyword id="KW-0813">Transport</keyword>
<sequence>MEILYNIFTIFFNQVMTNAPLLLGIVTCLGYILLRKSVSVIIKGTIKTIIGFMLLQAGSGILTSTFKPVVAKMSEVYGINGAISDTYASMMATIERMGDAYSWVGYAVLLALALNICYVLLRRITGIRTIMLTGHIMFQQAGLIAVSFYIFGYSMWTTIICTAILVSLYWGITSNMMYKPTQEVTDGCGFSIGHQQQFASWIAYKVAPFLGKKEESVEDLKLPGWLNIFHDNIVSTAIVMTIFFGAILLSFGIDTVQAMAGKVHWTVYILQTGFSFAVAIFIITQGVRMFVAELSEAFNGISQRLIPGAVLAIDCAAIYSFAPNAVVWGFMWGTIGQLIAVGVLVACGSSILIIPGFIPMFFSNATIGVFANHFGGWRAALKICLVMGMIEIFGCVWAVKLTGMSAWMGMADWSILAPPMMQGFFSIGIAFMAVIIVIALAYMFFAGRALRAEEDAEKQLAEQSA</sequence>
<comment type="function">
    <text evidence="1">The phosphoenolpyruvate-dependent sugar phosphotransferase system (sugar PTS), a major carbohydrate active transport system, catalyzes the phosphorylation of incoming sugar substrates concomitantly with their translocation across the cell membrane. The enzyme II UlaABC PTS system is involved in ascorbate transport.</text>
</comment>
<comment type="subunit">
    <text evidence="1">Homodimer.</text>
</comment>
<comment type="subcellular location">
    <subcellularLocation>
        <location evidence="1">Cell inner membrane</location>
        <topology evidence="1">Multi-pass membrane protein</topology>
    </subcellularLocation>
</comment>
<comment type="induction">
    <text evidence="1">Induced by L-ascorbate. Repressed by UlaR.</text>
</comment>
<comment type="domain">
    <text evidence="1">In classical PTS systems, the PTS EIIC type-2 domain forms the translocation channel and contains the specific substrate-binding site. UlaA does not exhibit the topological features of any recognized enzyme IIC.</text>
</comment>
<comment type="similarity">
    <text evidence="2">Belongs to the UlaA family.</text>
</comment>
<comment type="sequence caution" evidence="2">
    <conflict type="erroneous initiation">
        <sequence resource="EMBL-CDS" id="AAV79937"/>
    </conflict>
</comment>
<name>ULAA_SALPA</name>
<proteinExistence type="inferred from homology"/>
<accession>Q5PJ48</accession>